<evidence type="ECO:0000250" key="1"/>
<evidence type="ECO:0000305" key="2"/>
<feature type="chain" id="PRO_0000096220" description="tRNA threonylcarbamoyladenosine biosynthesis protein TsaE">
    <location>
        <begin position="1"/>
        <end position="135"/>
    </location>
</feature>
<feature type="binding site" evidence="1">
    <location>
        <begin position="35"/>
        <end position="40"/>
    </location>
    <ligand>
        <name>ATP</name>
        <dbReference type="ChEBI" id="CHEBI:30616"/>
    </ligand>
</feature>
<feature type="binding site" evidence="1">
    <location>
        <position position="39"/>
    </location>
    <ligand>
        <name>Mg(2+)</name>
        <dbReference type="ChEBI" id="CHEBI:18420"/>
    </ligand>
</feature>
<feature type="binding site" evidence="1">
    <location>
        <position position="104"/>
    </location>
    <ligand>
        <name>Mg(2+)</name>
        <dbReference type="ChEBI" id="CHEBI:18420"/>
    </ligand>
</feature>
<organism>
    <name type="scientific">Treponema pallidum (strain Nichols)</name>
    <dbReference type="NCBI Taxonomy" id="243276"/>
    <lineage>
        <taxon>Bacteria</taxon>
        <taxon>Pseudomonadati</taxon>
        <taxon>Spirochaetota</taxon>
        <taxon>Spirochaetia</taxon>
        <taxon>Spirochaetales</taxon>
        <taxon>Treponemataceae</taxon>
        <taxon>Treponema</taxon>
    </lineage>
</organism>
<protein>
    <recommendedName>
        <fullName>tRNA threonylcarbamoyladenosine biosynthesis protein TsaE</fullName>
    </recommendedName>
    <alternativeName>
        <fullName>t(6)A37 threonylcarbamoyladenosine biosynthesis protein TsaE</fullName>
    </alternativeName>
</protein>
<proteinExistence type="inferred from homology"/>
<keyword id="KW-0067">ATP-binding</keyword>
<keyword id="KW-0963">Cytoplasm</keyword>
<keyword id="KW-0460">Magnesium</keyword>
<keyword id="KW-0479">Metal-binding</keyword>
<keyword id="KW-0547">Nucleotide-binding</keyword>
<keyword id="KW-1185">Reference proteome</keyword>
<keyword id="KW-0819">tRNA processing</keyword>
<comment type="function">
    <text evidence="1">Required for the formation of a threonylcarbamoyl group on adenosine at position 37 (t(6)A37) in tRNAs that read codons beginning with adenine. Is involved in the transfer of the threonylcarbamoyl moiety of threonylcarbamoyl-AMP (TC-AMP) to the N6 group of A37, together with TsaD and TsaB. TsaE seems to play an indirect role in the t(6)A biosynthesis pathway, possibly in regulating the core enzymatic function of TsaD (By similarity).</text>
</comment>
<comment type="subcellular location">
    <subcellularLocation>
        <location evidence="1">Cytoplasm</location>
    </subcellularLocation>
</comment>
<comment type="similarity">
    <text evidence="2">Belongs to the TsaE family.</text>
</comment>
<accession>O83845</accession>
<name>TSAE_TREPA</name>
<gene>
    <name type="primary">tsaE</name>
    <name type="ordered locus">TP_0875</name>
</gene>
<sequence length="135" mass="14672">MRCVSRSAQDTARWGTVVGRLLEEGSVVVLQGALAAGKTCFVKGLALGLGIQEEITSPTFTLLAVYHGRLTLYHMDVYRLASLEDFFDIGAQECVYGTGVCVIEWGERVASELPEYTVTISLRVLADGNREITVA</sequence>
<dbReference type="EMBL" id="AE000520">
    <property type="protein sequence ID" value="AAC65838.1"/>
    <property type="molecule type" value="Genomic_DNA"/>
</dbReference>
<dbReference type="PIR" id="A71271">
    <property type="entry name" value="A71271"/>
</dbReference>
<dbReference type="RefSeq" id="WP_010882318.1">
    <property type="nucleotide sequence ID" value="NC_021490.2"/>
</dbReference>
<dbReference type="SMR" id="O83845"/>
<dbReference type="IntAct" id="O83845">
    <property type="interactions" value="6"/>
</dbReference>
<dbReference type="STRING" id="243276.TP_0875"/>
<dbReference type="EnsemblBacteria" id="AAC65838">
    <property type="protein sequence ID" value="AAC65838"/>
    <property type="gene ID" value="TP_0875"/>
</dbReference>
<dbReference type="GeneID" id="93876629"/>
<dbReference type="KEGG" id="tpa:TP_0875"/>
<dbReference type="KEGG" id="tpw:TPANIC_0875"/>
<dbReference type="eggNOG" id="COG0802">
    <property type="taxonomic scope" value="Bacteria"/>
</dbReference>
<dbReference type="HOGENOM" id="CLU_087829_5_2_12"/>
<dbReference type="OrthoDB" id="9815896at2"/>
<dbReference type="Proteomes" id="UP000000811">
    <property type="component" value="Chromosome"/>
</dbReference>
<dbReference type="GO" id="GO:0005737">
    <property type="term" value="C:cytoplasm"/>
    <property type="evidence" value="ECO:0007669"/>
    <property type="project" value="UniProtKB-SubCell"/>
</dbReference>
<dbReference type="GO" id="GO:0005524">
    <property type="term" value="F:ATP binding"/>
    <property type="evidence" value="ECO:0007669"/>
    <property type="project" value="UniProtKB-KW"/>
</dbReference>
<dbReference type="GO" id="GO:0046872">
    <property type="term" value="F:metal ion binding"/>
    <property type="evidence" value="ECO:0007669"/>
    <property type="project" value="UniProtKB-KW"/>
</dbReference>
<dbReference type="GO" id="GO:0002949">
    <property type="term" value="P:tRNA threonylcarbamoyladenosine modification"/>
    <property type="evidence" value="ECO:0007669"/>
    <property type="project" value="InterPro"/>
</dbReference>
<dbReference type="Gene3D" id="3.40.50.300">
    <property type="entry name" value="P-loop containing nucleotide triphosphate hydrolases"/>
    <property type="match status" value="1"/>
</dbReference>
<dbReference type="InterPro" id="IPR027417">
    <property type="entry name" value="P-loop_NTPase"/>
</dbReference>
<dbReference type="InterPro" id="IPR003442">
    <property type="entry name" value="T6A_TsaE"/>
</dbReference>
<dbReference type="NCBIfam" id="TIGR00150">
    <property type="entry name" value="T6A_YjeE"/>
    <property type="match status" value="1"/>
</dbReference>
<dbReference type="PANTHER" id="PTHR33540">
    <property type="entry name" value="TRNA THREONYLCARBAMOYLADENOSINE BIOSYNTHESIS PROTEIN TSAE"/>
    <property type="match status" value="1"/>
</dbReference>
<dbReference type="PANTHER" id="PTHR33540:SF2">
    <property type="entry name" value="TRNA THREONYLCARBAMOYLADENOSINE BIOSYNTHESIS PROTEIN TSAE"/>
    <property type="match status" value="1"/>
</dbReference>
<dbReference type="Pfam" id="PF02367">
    <property type="entry name" value="TsaE"/>
    <property type="match status" value="1"/>
</dbReference>
<dbReference type="SUPFAM" id="SSF52540">
    <property type="entry name" value="P-loop containing nucleoside triphosphate hydrolases"/>
    <property type="match status" value="1"/>
</dbReference>
<reference key="1">
    <citation type="journal article" date="1998" name="Science">
        <title>Complete genome sequence of Treponema pallidum, the syphilis spirochete.</title>
        <authorList>
            <person name="Fraser C.M."/>
            <person name="Norris S.J."/>
            <person name="Weinstock G.M."/>
            <person name="White O."/>
            <person name="Sutton G.G."/>
            <person name="Dodson R.J."/>
            <person name="Gwinn M.L."/>
            <person name="Hickey E.K."/>
            <person name="Clayton R.A."/>
            <person name="Ketchum K.A."/>
            <person name="Sodergren E."/>
            <person name="Hardham J.M."/>
            <person name="McLeod M.P."/>
            <person name="Salzberg S.L."/>
            <person name="Peterson J.D."/>
            <person name="Khalak H.G."/>
            <person name="Richardson D.L."/>
            <person name="Howell J.K."/>
            <person name="Chidambaram M."/>
            <person name="Utterback T.R."/>
            <person name="McDonald L.A."/>
            <person name="Artiach P."/>
            <person name="Bowman C."/>
            <person name="Cotton M.D."/>
            <person name="Fujii C."/>
            <person name="Garland S.A."/>
            <person name="Hatch B."/>
            <person name="Horst K."/>
            <person name="Roberts K.M."/>
            <person name="Sandusky M."/>
            <person name="Weidman J.F."/>
            <person name="Smith H.O."/>
            <person name="Venter J.C."/>
        </authorList>
    </citation>
    <scope>NUCLEOTIDE SEQUENCE [LARGE SCALE GENOMIC DNA]</scope>
    <source>
        <strain>Nichols</strain>
    </source>
</reference>